<accession>Q92PR8</accession>
<proteinExistence type="inferred from homology"/>
<name>MOAC_RHIME</name>
<evidence type="ECO:0000255" key="1">
    <source>
        <dbReference type="HAMAP-Rule" id="MF_01224"/>
    </source>
</evidence>
<comment type="function">
    <text evidence="1">Catalyzes the conversion of (8S)-3',8-cyclo-7,8-dihydroguanosine 5'-triphosphate to cyclic pyranopterin monophosphate (cPMP).</text>
</comment>
<comment type="catalytic activity">
    <reaction evidence="1">
        <text>(8S)-3',8-cyclo-7,8-dihydroguanosine 5'-triphosphate = cyclic pyranopterin phosphate + diphosphate</text>
        <dbReference type="Rhea" id="RHEA:49580"/>
        <dbReference type="ChEBI" id="CHEBI:33019"/>
        <dbReference type="ChEBI" id="CHEBI:59648"/>
        <dbReference type="ChEBI" id="CHEBI:131766"/>
        <dbReference type="EC" id="4.6.1.17"/>
    </reaction>
</comment>
<comment type="pathway">
    <text evidence="1">Cofactor biosynthesis; molybdopterin biosynthesis.</text>
</comment>
<comment type="subunit">
    <text evidence="1">Homohexamer; trimer of dimers.</text>
</comment>
<comment type="similarity">
    <text evidence="1">Belongs to the MoaC family.</text>
</comment>
<sequence>MSGPALTHIDSAGEASMVDVGDKAETVRVAVAEGFVRMKPETLALIRQGNAKKGDVIATARLAGIMAAKQTSSLIPLCHPLMLTKVSVDITPDDALPGLRVEAMAKLTGRTGVEMEALTAVSVACLTIYDMAKAADREMEIGGVRLVSKSGGRSGDYHRAGEMR</sequence>
<protein>
    <recommendedName>
        <fullName evidence="1">Cyclic pyranopterin monophosphate synthase</fullName>
        <ecNumber evidence="1">4.6.1.17</ecNumber>
    </recommendedName>
    <alternativeName>
        <fullName evidence="1">Molybdenum cofactor biosynthesis protein C</fullName>
    </alternativeName>
</protein>
<gene>
    <name evidence="1" type="primary">moaC</name>
    <name type="ordered locus">R01662</name>
    <name type="ORF">SMc00237</name>
</gene>
<keyword id="KW-0456">Lyase</keyword>
<keyword id="KW-0501">Molybdenum cofactor biosynthesis</keyword>
<keyword id="KW-1185">Reference proteome</keyword>
<organism>
    <name type="scientific">Rhizobium meliloti (strain 1021)</name>
    <name type="common">Ensifer meliloti</name>
    <name type="synonym">Sinorhizobium meliloti</name>
    <dbReference type="NCBI Taxonomy" id="266834"/>
    <lineage>
        <taxon>Bacteria</taxon>
        <taxon>Pseudomonadati</taxon>
        <taxon>Pseudomonadota</taxon>
        <taxon>Alphaproteobacteria</taxon>
        <taxon>Hyphomicrobiales</taxon>
        <taxon>Rhizobiaceae</taxon>
        <taxon>Sinorhizobium/Ensifer group</taxon>
        <taxon>Sinorhizobium</taxon>
    </lineage>
</organism>
<reference key="1">
    <citation type="journal article" date="2001" name="Proc. Natl. Acad. Sci. U.S.A.">
        <title>Analysis of the chromosome sequence of the legume symbiont Sinorhizobium meliloti strain 1021.</title>
        <authorList>
            <person name="Capela D."/>
            <person name="Barloy-Hubler F."/>
            <person name="Gouzy J."/>
            <person name="Bothe G."/>
            <person name="Ampe F."/>
            <person name="Batut J."/>
            <person name="Boistard P."/>
            <person name="Becker A."/>
            <person name="Boutry M."/>
            <person name="Cadieu E."/>
            <person name="Dreano S."/>
            <person name="Gloux S."/>
            <person name="Godrie T."/>
            <person name="Goffeau A."/>
            <person name="Kahn D."/>
            <person name="Kiss E."/>
            <person name="Lelaure V."/>
            <person name="Masuy D."/>
            <person name="Pohl T."/>
            <person name="Portetelle D."/>
            <person name="Puehler A."/>
            <person name="Purnelle B."/>
            <person name="Ramsperger U."/>
            <person name="Renard C."/>
            <person name="Thebault P."/>
            <person name="Vandenbol M."/>
            <person name="Weidner S."/>
            <person name="Galibert F."/>
        </authorList>
    </citation>
    <scope>NUCLEOTIDE SEQUENCE [LARGE SCALE GENOMIC DNA]</scope>
    <source>
        <strain>1021</strain>
    </source>
</reference>
<reference key="2">
    <citation type="journal article" date="2001" name="Science">
        <title>The composite genome of the legume symbiont Sinorhizobium meliloti.</title>
        <authorList>
            <person name="Galibert F."/>
            <person name="Finan T.M."/>
            <person name="Long S.R."/>
            <person name="Puehler A."/>
            <person name="Abola P."/>
            <person name="Ampe F."/>
            <person name="Barloy-Hubler F."/>
            <person name="Barnett M.J."/>
            <person name="Becker A."/>
            <person name="Boistard P."/>
            <person name="Bothe G."/>
            <person name="Boutry M."/>
            <person name="Bowser L."/>
            <person name="Buhrmester J."/>
            <person name="Cadieu E."/>
            <person name="Capela D."/>
            <person name="Chain P."/>
            <person name="Cowie A."/>
            <person name="Davis R.W."/>
            <person name="Dreano S."/>
            <person name="Federspiel N.A."/>
            <person name="Fisher R.F."/>
            <person name="Gloux S."/>
            <person name="Godrie T."/>
            <person name="Goffeau A."/>
            <person name="Golding B."/>
            <person name="Gouzy J."/>
            <person name="Gurjal M."/>
            <person name="Hernandez-Lucas I."/>
            <person name="Hong A."/>
            <person name="Huizar L."/>
            <person name="Hyman R.W."/>
            <person name="Jones T."/>
            <person name="Kahn D."/>
            <person name="Kahn M.L."/>
            <person name="Kalman S."/>
            <person name="Keating D.H."/>
            <person name="Kiss E."/>
            <person name="Komp C."/>
            <person name="Lelaure V."/>
            <person name="Masuy D."/>
            <person name="Palm C."/>
            <person name="Peck M.C."/>
            <person name="Pohl T.M."/>
            <person name="Portetelle D."/>
            <person name="Purnelle B."/>
            <person name="Ramsperger U."/>
            <person name="Surzycki R."/>
            <person name="Thebault P."/>
            <person name="Vandenbol M."/>
            <person name="Vorhoelter F.J."/>
            <person name="Weidner S."/>
            <person name="Wells D.H."/>
            <person name="Wong K."/>
            <person name="Yeh K.-C."/>
            <person name="Batut J."/>
        </authorList>
    </citation>
    <scope>NUCLEOTIDE SEQUENCE [LARGE SCALE GENOMIC DNA]</scope>
    <source>
        <strain>1021</strain>
    </source>
</reference>
<dbReference type="EC" id="4.6.1.17" evidence="1"/>
<dbReference type="EMBL" id="AL591688">
    <property type="protein sequence ID" value="CAC46241.1"/>
    <property type="molecule type" value="Genomic_DNA"/>
</dbReference>
<dbReference type="RefSeq" id="NP_385768.1">
    <property type="nucleotide sequence ID" value="NC_003047.1"/>
</dbReference>
<dbReference type="RefSeq" id="WP_010969379.1">
    <property type="nucleotide sequence ID" value="NC_003047.1"/>
</dbReference>
<dbReference type="SMR" id="Q92PR8"/>
<dbReference type="EnsemblBacteria" id="CAC46241">
    <property type="protein sequence ID" value="CAC46241"/>
    <property type="gene ID" value="SMc00237"/>
</dbReference>
<dbReference type="KEGG" id="sme:SMc00237"/>
<dbReference type="PATRIC" id="fig|266834.11.peg.3095"/>
<dbReference type="eggNOG" id="COG0315">
    <property type="taxonomic scope" value="Bacteria"/>
</dbReference>
<dbReference type="HOGENOM" id="CLU_074693_1_1_5"/>
<dbReference type="OrthoDB" id="9794429at2"/>
<dbReference type="UniPathway" id="UPA00344"/>
<dbReference type="Proteomes" id="UP000001976">
    <property type="component" value="Chromosome"/>
</dbReference>
<dbReference type="GO" id="GO:0061799">
    <property type="term" value="F:cyclic pyranopterin monophosphate synthase activity"/>
    <property type="evidence" value="ECO:0007669"/>
    <property type="project" value="UniProtKB-UniRule"/>
</dbReference>
<dbReference type="GO" id="GO:0006777">
    <property type="term" value="P:Mo-molybdopterin cofactor biosynthetic process"/>
    <property type="evidence" value="ECO:0007669"/>
    <property type="project" value="UniProtKB-UniRule"/>
</dbReference>
<dbReference type="CDD" id="cd01420">
    <property type="entry name" value="MoaC_PE"/>
    <property type="match status" value="1"/>
</dbReference>
<dbReference type="FunFam" id="3.30.70.640:FF:000001">
    <property type="entry name" value="Cyclic pyranopterin monophosphate synthase"/>
    <property type="match status" value="1"/>
</dbReference>
<dbReference type="Gene3D" id="3.30.70.640">
    <property type="entry name" value="Molybdopterin cofactor biosynthesis C (MoaC) domain"/>
    <property type="match status" value="1"/>
</dbReference>
<dbReference type="HAMAP" id="MF_01224_B">
    <property type="entry name" value="MoaC_B"/>
    <property type="match status" value="1"/>
</dbReference>
<dbReference type="InterPro" id="IPR023045">
    <property type="entry name" value="MoaC"/>
</dbReference>
<dbReference type="InterPro" id="IPR047594">
    <property type="entry name" value="MoaC_bact/euk"/>
</dbReference>
<dbReference type="InterPro" id="IPR036522">
    <property type="entry name" value="MoaC_sf"/>
</dbReference>
<dbReference type="InterPro" id="IPR050105">
    <property type="entry name" value="MoCo_biosynth_MoaA/MoaC"/>
</dbReference>
<dbReference type="InterPro" id="IPR002820">
    <property type="entry name" value="Mopterin_CF_biosynth-C_dom"/>
</dbReference>
<dbReference type="NCBIfam" id="TIGR00581">
    <property type="entry name" value="moaC"/>
    <property type="match status" value="1"/>
</dbReference>
<dbReference type="NCBIfam" id="NF006870">
    <property type="entry name" value="PRK09364.1"/>
    <property type="match status" value="1"/>
</dbReference>
<dbReference type="PANTHER" id="PTHR22960">
    <property type="entry name" value="MOLYBDOPTERIN COFACTOR SYNTHESIS PROTEIN A"/>
    <property type="match status" value="1"/>
</dbReference>
<dbReference type="Pfam" id="PF01967">
    <property type="entry name" value="MoaC"/>
    <property type="match status" value="1"/>
</dbReference>
<dbReference type="SUPFAM" id="SSF55040">
    <property type="entry name" value="Molybdenum cofactor biosynthesis protein C, MoaC"/>
    <property type="match status" value="1"/>
</dbReference>
<feature type="chain" id="PRO_0000097822" description="Cyclic pyranopterin monophosphate synthase">
    <location>
        <begin position="1"/>
        <end position="164"/>
    </location>
</feature>
<feature type="active site" evidence="1">
    <location>
        <position position="130"/>
    </location>
</feature>
<feature type="binding site" evidence="1">
    <location>
        <begin position="77"/>
        <end position="79"/>
    </location>
    <ligand>
        <name>substrate</name>
    </ligand>
</feature>
<feature type="binding site" evidence="1">
    <location>
        <begin position="115"/>
        <end position="116"/>
    </location>
    <ligand>
        <name>substrate</name>
    </ligand>
</feature>